<sequence>MSDESNPPKVILLVEDSKADSRLVQEVLKTSTIDHELIILRDGLAAMAFLQQQGEYENSPRPNLILLDLNLPKKDGREVLAEIKQNPDLKRIPVVVLTTSHNEDDVIASYELHVNCYLTKSRNLKDLFKMVQGIESFWLETVTLPAA</sequence>
<name>RCP1_SYNY3</name>
<accession>Q55169</accession>
<dbReference type="EMBL" id="BA000022">
    <property type="protein sequence ID" value="BAA10308.1"/>
    <property type="molecule type" value="Genomic_DNA"/>
</dbReference>
<dbReference type="PIR" id="S74390">
    <property type="entry name" value="S74390"/>
</dbReference>
<dbReference type="PDB" id="1I3C">
    <property type="method" value="X-ray"/>
    <property type="resolution" value="1.90 A"/>
    <property type="chains" value="A/B=1-147"/>
</dbReference>
<dbReference type="PDB" id="1JLK">
    <property type="method" value="X-ray"/>
    <property type="resolution" value="2.30 A"/>
    <property type="chains" value="A/B=1-147"/>
</dbReference>
<dbReference type="PDBsum" id="1I3C"/>
<dbReference type="PDBsum" id="1JLK"/>
<dbReference type="SMR" id="Q55169"/>
<dbReference type="IntAct" id="Q55169">
    <property type="interactions" value="4"/>
</dbReference>
<dbReference type="STRING" id="1148.gene:10499808"/>
<dbReference type="PaxDb" id="1148-1001166"/>
<dbReference type="EnsemblBacteria" id="BAA10308">
    <property type="protein sequence ID" value="BAA10308"/>
    <property type="gene ID" value="BAA10308"/>
</dbReference>
<dbReference type="KEGG" id="syn:slr0474"/>
<dbReference type="eggNOG" id="COG0784">
    <property type="taxonomic scope" value="Bacteria"/>
</dbReference>
<dbReference type="InParanoid" id="Q55169"/>
<dbReference type="PhylomeDB" id="Q55169"/>
<dbReference type="EvolutionaryTrace" id="Q55169"/>
<dbReference type="Proteomes" id="UP000001425">
    <property type="component" value="Chromosome"/>
</dbReference>
<dbReference type="GO" id="GO:0000160">
    <property type="term" value="P:phosphorelay signal transduction system"/>
    <property type="evidence" value="ECO:0007669"/>
    <property type="project" value="UniProtKB-KW"/>
</dbReference>
<dbReference type="CDD" id="cd17557">
    <property type="entry name" value="REC_Rcp-like"/>
    <property type="match status" value="1"/>
</dbReference>
<dbReference type="Gene3D" id="3.40.50.2300">
    <property type="match status" value="1"/>
</dbReference>
<dbReference type="InterPro" id="IPR011006">
    <property type="entry name" value="CheY-like_superfamily"/>
</dbReference>
<dbReference type="InterPro" id="IPR001789">
    <property type="entry name" value="Sig_transdc_resp-reg_receiver"/>
</dbReference>
<dbReference type="InterPro" id="IPR052893">
    <property type="entry name" value="TCS_response_regulator"/>
</dbReference>
<dbReference type="PANTHER" id="PTHR44520:SF2">
    <property type="entry name" value="RESPONSE REGULATOR RCP1"/>
    <property type="match status" value="1"/>
</dbReference>
<dbReference type="PANTHER" id="PTHR44520">
    <property type="entry name" value="RESPONSE REGULATOR RCP1-RELATED"/>
    <property type="match status" value="1"/>
</dbReference>
<dbReference type="Pfam" id="PF00072">
    <property type="entry name" value="Response_reg"/>
    <property type="match status" value="1"/>
</dbReference>
<dbReference type="SMART" id="SM00448">
    <property type="entry name" value="REC"/>
    <property type="match status" value="1"/>
</dbReference>
<dbReference type="SUPFAM" id="SSF52172">
    <property type="entry name" value="CheY-like"/>
    <property type="match status" value="1"/>
</dbReference>
<dbReference type="PROSITE" id="PS50110">
    <property type="entry name" value="RESPONSE_REGULATORY"/>
    <property type="match status" value="1"/>
</dbReference>
<feature type="chain" id="PRO_0000081208" description="Response regulator Rcp1">
    <location>
        <begin position="1"/>
        <end position="147"/>
    </location>
</feature>
<feature type="domain" description="Response regulatory" evidence="1">
    <location>
        <begin position="10"/>
        <end position="135"/>
    </location>
</feature>
<feature type="modified residue" description="4-aspartylphosphate" evidence="1 2">
    <location>
        <position position="68"/>
    </location>
</feature>
<feature type="mutagenesis site" description="Unable to be phosphorylated by cph1." evidence="2">
    <original>D</original>
    <variation>A</variation>
    <location>
        <position position="68"/>
    </location>
</feature>
<feature type="strand" evidence="3">
    <location>
        <begin position="9"/>
        <end position="14"/>
    </location>
</feature>
<feature type="helix" evidence="3">
    <location>
        <begin position="18"/>
        <end position="29"/>
    </location>
</feature>
<feature type="strand" evidence="3">
    <location>
        <begin position="35"/>
        <end position="40"/>
    </location>
</feature>
<feature type="helix" evidence="3">
    <location>
        <begin position="43"/>
        <end position="50"/>
    </location>
</feature>
<feature type="helix" evidence="3">
    <location>
        <begin position="54"/>
        <end position="56"/>
    </location>
</feature>
<feature type="strand" evidence="3">
    <location>
        <begin position="63"/>
        <end position="67"/>
    </location>
</feature>
<feature type="strand" evidence="3">
    <location>
        <begin position="72"/>
        <end position="74"/>
    </location>
</feature>
<feature type="helix" evidence="3">
    <location>
        <begin position="76"/>
        <end position="85"/>
    </location>
</feature>
<feature type="turn" evidence="3">
    <location>
        <begin position="87"/>
        <end position="91"/>
    </location>
</feature>
<feature type="strand" evidence="3">
    <location>
        <begin position="94"/>
        <end position="99"/>
    </location>
</feature>
<feature type="helix" evidence="3">
    <location>
        <begin position="103"/>
        <end position="111"/>
    </location>
</feature>
<feature type="strand" evidence="3">
    <location>
        <begin position="115"/>
        <end position="119"/>
    </location>
</feature>
<feature type="helix" evidence="3">
    <location>
        <begin position="124"/>
        <end position="138"/>
    </location>
</feature>
<feature type="turn" evidence="3">
    <location>
        <begin position="139"/>
        <end position="141"/>
    </location>
</feature>
<organism>
    <name type="scientific">Synechocystis sp. (strain ATCC 27184 / PCC 6803 / Kazusa)</name>
    <dbReference type="NCBI Taxonomy" id="1111708"/>
    <lineage>
        <taxon>Bacteria</taxon>
        <taxon>Bacillati</taxon>
        <taxon>Cyanobacteriota</taxon>
        <taxon>Cyanophyceae</taxon>
        <taxon>Synechococcales</taxon>
        <taxon>Merismopediaceae</taxon>
        <taxon>Synechocystis</taxon>
    </lineage>
</organism>
<proteinExistence type="evidence at protein level"/>
<comment type="function">
    <text>Forms a two-component system with Cph1 in which it acts as receiver substrate.</text>
</comment>
<comment type="interaction">
    <interactant intactId="EBI-766949">
        <id>Q55169</id>
    </interactant>
    <interactant intactId="EBI-594457">
        <id>Q55168</id>
        <label>cph1</label>
    </interactant>
    <organismsDiffer>false</organismsDiffer>
    <experiments>2</experiments>
</comment>
<comment type="PTM">
    <text evidence="2">Phosphorylated by Cph1.</text>
</comment>
<protein>
    <recommendedName>
        <fullName>Response regulator Rcp1</fullName>
    </recommendedName>
</protein>
<evidence type="ECO:0000255" key="1">
    <source>
        <dbReference type="PROSITE-ProRule" id="PRU00169"/>
    </source>
</evidence>
<evidence type="ECO:0000269" key="2">
    <source>
    </source>
</evidence>
<evidence type="ECO:0007829" key="3">
    <source>
        <dbReference type="PDB" id="1I3C"/>
    </source>
</evidence>
<reference key="1">
    <citation type="journal article" date="1995" name="DNA Res.">
        <title>Sequence analysis of the genome of the unicellular cyanobacterium Synechocystis sp. strain PCC6803. I. Sequence features in the 1 Mb region from map positions 64% to 92% of the genome.</title>
        <authorList>
            <person name="Kaneko T."/>
            <person name="Tanaka A."/>
            <person name="Sato S."/>
            <person name="Kotani H."/>
            <person name="Sazuka T."/>
            <person name="Miyajima N."/>
            <person name="Sugiura M."/>
            <person name="Tabata S."/>
        </authorList>
    </citation>
    <scope>NUCLEOTIDE SEQUENCE [LARGE SCALE GENOMIC DNA]</scope>
    <source>
        <strain>ATCC 27184 / PCC 6803 / N-1</strain>
    </source>
</reference>
<reference key="2">
    <citation type="journal article" date="1996" name="DNA Res.">
        <title>Sequence analysis of the genome of the unicellular cyanobacterium Synechocystis sp. strain PCC6803. II. Sequence determination of the entire genome and assignment of potential protein-coding regions.</title>
        <authorList>
            <person name="Kaneko T."/>
            <person name="Sato S."/>
            <person name="Kotani H."/>
            <person name="Tanaka A."/>
            <person name="Asamizu E."/>
            <person name="Nakamura Y."/>
            <person name="Miyajima N."/>
            <person name="Hirosawa M."/>
            <person name="Sugiura M."/>
            <person name="Sasamoto S."/>
            <person name="Kimura T."/>
            <person name="Hosouchi T."/>
            <person name="Matsuno A."/>
            <person name="Muraki A."/>
            <person name="Nakazaki N."/>
            <person name="Naruo K."/>
            <person name="Okumura S."/>
            <person name="Shimpo S."/>
            <person name="Takeuchi C."/>
            <person name="Wada T."/>
            <person name="Watanabe A."/>
            <person name="Yamada M."/>
            <person name="Yasuda M."/>
            <person name="Tabata S."/>
        </authorList>
    </citation>
    <scope>NUCLEOTIDE SEQUENCE [LARGE SCALE GENOMIC DNA]</scope>
    <source>
        <strain>ATCC 27184 / PCC 6803 / Kazusa</strain>
    </source>
</reference>
<reference key="3">
    <citation type="journal article" date="1997" name="Science">
        <title>A cyanobacterial phytochrome two-component light sensory system.</title>
        <authorList>
            <person name="Yeh K.-C."/>
            <person name="Wu S.-H."/>
            <person name="Murphy J.T."/>
            <person name="Lagarias J.C."/>
        </authorList>
    </citation>
    <scope>PHOSPHORYLATION AT ASP-68</scope>
    <scope>MUTAGENESIS OF ASP-68</scope>
</reference>
<gene>
    <name type="primary">rcp1</name>
    <name type="ordered locus">slr0474</name>
</gene>
<keyword id="KW-0002">3D-structure</keyword>
<keyword id="KW-0597">Phosphoprotein</keyword>
<keyword id="KW-1185">Reference proteome</keyword>
<keyword id="KW-0902">Two-component regulatory system</keyword>